<sequence length="258" mass="29422">MDRSAEFRKWKAQCLSKADLSRKGSVDEDVVELVQFLNMRDQFFTTSSCAGRILLLDGGINGFEVQKQNCCWLLVTHKLCVKDDVIVALKKANGDATLKFEPFVLHVQCRQLQDAQILHSVAIDAGFRNSGITVGKRGKTMLAVRSTHGLEVPLSHKGKLMVTEEYIDFLLNVANQKMEENKKRIERFYNCLQHALERETMTNLHPKIKEKNNSSYTHKKKNPEKACAQCITKENDKELENDDDDDLGINVTIFPEDY</sequence>
<accession>Q5R5S9</accession>
<name>TYW3_PONAB</name>
<evidence type="ECO:0000250" key="1"/>
<evidence type="ECO:0000250" key="2">
    <source>
        <dbReference type="UniProtKB" id="Q8BSA9"/>
    </source>
</evidence>
<evidence type="ECO:0000305" key="3"/>
<comment type="function">
    <text evidence="1">Probable S-adenosyl-L-methionine-dependent methyltransferase that acts as a component of the wybutosine biosynthesis pathway. Wybutosine is a hyper modified guanosine with a tricyclic base found at the 3'-position adjacent to the anticodon of eukaryotic phenylalanine tRNA (By similarity).</text>
</comment>
<comment type="catalytic activity">
    <reaction>
        <text>4-demethyl-7-[(3S)-3-amino-3-carboxypropyl]wyosine(37) in tRNA(Phe) + S-adenosyl-L-methionine = 7-[(3S)-3-amino-3-carboxypropyl]wyosine(37) in tRNA(Phe) + S-adenosyl-L-homocysteine + H(+)</text>
        <dbReference type="Rhea" id="RHEA:36635"/>
        <dbReference type="Rhea" id="RHEA-COMP:10378"/>
        <dbReference type="Rhea" id="RHEA-COMP:10379"/>
        <dbReference type="ChEBI" id="CHEBI:15378"/>
        <dbReference type="ChEBI" id="CHEBI:57856"/>
        <dbReference type="ChEBI" id="CHEBI:59789"/>
        <dbReference type="ChEBI" id="CHEBI:73543"/>
        <dbReference type="ChEBI" id="CHEBI:73550"/>
        <dbReference type="EC" id="2.1.1.282"/>
    </reaction>
</comment>
<comment type="pathway">
    <text>tRNA modification; wybutosine-tRNA(Phe) biosynthesis.</text>
</comment>
<comment type="similarity">
    <text evidence="3">Belongs to the TYW3 family.</text>
</comment>
<protein>
    <recommendedName>
        <fullName>tRNA wybutosine-synthesizing protein 3 homolog</fullName>
        <shortName>tRNA-yW-synthesizing protein 3</shortName>
        <ecNumber>2.1.1.282</ecNumber>
    </recommendedName>
    <alternativeName>
        <fullName>tRNA(Phe) 7-((3-amino-3-carboxypropyl)-4-demethylwyosine(37)-N(4))-methyltransferase</fullName>
    </alternativeName>
</protein>
<gene>
    <name type="primary">TYW3</name>
</gene>
<dbReference type="EC" id="2.1.1.282"/>
<dbReference type="EMBL" id="CR860775">
    <property type="protein sequence ID" value="CAH92887.1"/>
    <property type="molecule type" value="mRNA"/>
</dbReference>
<dbReference type="RefSeq" id="NP_001126692.1">
    <property type="nucleotide sequence ID" value="NM_001133220.1"/>
</dbReference>
<dbReference type="RefSeq" id="XP_009247177.1">
    <property type="nucleotide sequence ID" value="XM_009248902.1"/>
</dbReference>
<dbReference type="RefSeq" id="XP_009247178.1">
    <property type="nucleotide sequence ID" value="XM_009248903.1"/>
</dbReference>
<dbReference type="RefSeq" id="XP_063575303.1">
    <property type="nucleotide sequence ID" value="XM_063719233.1"/>
</dbReference>
<dbReference type="SMR" id="Q5R5S9"/>
<dbReference type="FunCoup" id="Q5R5S9">
    <property type="interactions" value="916"/>
</dbReference>
<dbReference type="STRING" id="9601.ENSPPYP00000001435"/>
<dbReference type="Ensembl" id="ENSPPYT00000001480.2">
    <property type="protein sequence ID" value="ENSPPYP00000001435.1"/>
    <property type="gene ID" value="ENSPPYG00000001234.2"/>
</dbReference>
<dbReference type="GeneID" id="100173692"/>
<dbReference type="KEGG" id="pon:100173692"/>
<dbReference type="CTD" id="127253"/>
<dbReference type="eggNOG" id="KOG1228">
    <property type="taxonomic scope" value="Eukaryota"/>
</dbReference>
<dbReference type="GeneTree" id="ENSGT00940000153304"/>
<dbReference type="HOGENOM" id="CLU_047426_1_1_1"/>
<dbReference type="InParanoid" id="Q5R5S9"/>
<dbReference type="OMA" id="TWLYVSH"/>
<dbReference type="OrthoDB" id="263283at2759"/>
<dbReference type="TreeFam" id="TF329327"/>
<dbReference type="UniPathway" id="UPA00375"/>
<dbReference type="Proteomes" id="UP000001595">
    <property type="component" value="Chromosome 1"/>
</dbReference>
<dbReference type="GO" id="GO:0008168">
    <property type="term" value="F:methyltransferase activity"/>
    <property type="evidence" value="ECO:0007669"/>
    <property type="project" value="UniProtKB-KW"/>
</dbReference>
<dbReference type="GO" id="GO:0032259">
    <property type="term" value="P:methylation"/>
    <property type="evidence" value="ECO:0007669"/>
    <property type="project" value="UniProtKB-KW"/>
</dbReference>
<dbReference type="GO" id="GO:0008033">
    <property type="term" value="P:tRNA processing"/>
    <property type="evidence" value="ECO:0007669"/>
    <property type="project" value="UniProtKB-KW"/>
</dbReference>
<dbReference type="FunFam" id="3.30.1960.10:FF:000001">
    <property type="entry name" value="tRNA wybutosine-synthesizing protein 3 homolog"/>
    <property type="match status" value="1"/>
</dbReference>
<dbReference type="Gene3D" id="3.30.1960.10">
    <property type="entry name" value="tRNA wybutosine-synthesizing-like"/>
    <property type="match status" value="1"/>
</dbReference>
<dbReference type="InterPro" id="IPR003827">
    <property type="entry name" value="tRNA_yW-synthesising"/>
</dbReference>
<dbReference type="InterPro" id="IPR036602">
    <property type="entry name" value="tRNA_yW-synthesising-like_sf"/>
</dbReference>
<dbReference type="PANTHER" id="PTHR48418">
    <property type="entry name" value="TRNA WYBUTOSINE-SYNTHESIZING PROTEIN 3"/>
    <property type="match status" value="1"/>
</dbReference>
<dbReference type="PANTHER" id="PTHR48418:SF1">
    <property type="entry name" value="TRNA WYBUTOSINE-SYNTHESIZING PROTEIN 3"/>
    <property type="match status" value="1"/>
</dbReference>
<dbReference type="Pfam" id="PF02676">
    <property type="entry name" value="TYW3"/>
    <property type="match status" value="1"/>
</dbReference>
<dbReference type="SUPFAM" id="SSF111278">
    <property type="entry name" value="SSo0622-like"/>
    <property type="match status" value="1"/>
</dbReference>
<proteinExistence type="evidence at transcript level"/>
<feature type="chain" id="PRO_0000281845" description="tRNA wybutosine-synthesizing protein 3 homolog">
    <location>
        <begin position="1"/>
        <end position="258"/>
    </location>
</feature>
<feature type="modified residue" description="Phosphoserine" evidence="2">
    <location>
        <position position="25"/>
    </location>
</feature>
<reference key="1">
    <citation type="submission" date="2004-11" db="EMBL/GenBank/DDBJ databases">
        <authorList>
            <consortium name="The German cDNA consortium"/>
        </authorList>
    </citation>
    <scope>NUCLEOTIDE SEQUENCE [LARGE SCALE MRNA]</scope>
    <source>
        <tissue>Brain cortex</tissue>
    </source>
</reference>
<keyword id="KW-0489">Methyltransferase</keyword>
<keyword id="KW-0597">Phosphoprotein</keyword>
<keyword id="KW-1185">Reference proteome</keyword>
<keyword id="KW-0949">S-adenosyl-L-methionine</keyword>
<keyword id="KW-0808">Transferase</keyword>
<keyword id="KW-0819">tRNA processing</keyword>
<organism>
    <name type="scientific">Pongo abelii</name>
    <name type="common">Sumatran orangutan</name>
    <name type="synonym">Pongo pygmaeus abelii</name>
    <dbReference type="NCBI Taxonomy" id="9601"/>
    <lineage>
        <taxon>Eukaryota</taxon>
        <taxon>Metazoa</taxon>
        <taxon>Chordata</taxon>
        <taxon>Craniata</taxon>
        <taxon>Vertebrata</taxon>
        <taxon>Euteleostomi</taxon>
        <taxon>Mammalia</taxon>
        <taxon>Eutheria</taxon>
        <taxon>Euarchontoglires</taxon>
        <taxon>Primates</taxon>
        <taxon>Haplorrhini</taxon>
        <taxon>Catarrhini</taxon>
        <taxon>Hominidae</taxon>
        <taxon>Pongo</taxon>
    </lineage>
</organism>